<reference key="1">
    <citation type="journal article" date="2001" name="Genome Res.">
        <title>The complete genome sequence of the lactic acid bacterium Lactococcus lactis ssp. lactis IL1403.</title>
        <authorList>
            <person name="Bolotin A."/>
            <person name="Wincker P."/>
            <person name="Mauger S."/>
            <person name="Jaillon O."/>
            <person name="Malarme K."/>
            <person name="Weissenbach J."/>
            <person name="Ehrlich S.D."/>
            <person name="Sorokin A."/>
        </authorList>
    </citation>
    <scope>NUCLEOTIDE SEQUENCE [LARGE SCALE GENOMIC DNA]</scope>
    <source>
        <strain>IL1403</strain>
    </source>
</reference>
<proteinExistence type="inferred from homology"/>
<feature type="chain" id="PRO_0000220576" description="UPF0177 protein YaiH">
    <location>
        <begin position="1"/>
        <end position="236"/>
    </location>
</feature>
<feature type="transmembrane region" description="Helical" evidence="1">
    <location>
        <begin position="16"/>
        <end position="36"/>
    </location>
</feature>
<feature type="transmembrane region" description="Helical" evidence="1">
    <location>
        <begin position="51"/>
        <end position="71"/>
    </location>
</feature>
<feature type="transmembrane region" description="Helical" evidence="1">
    <location>
        <begin position="90"/>
        <end position="110"/>
    </location>
</feature>
<feature type="transmembrane region" description="Helical" evidence="1">
    <location>
        <begin position="131"/>
        <end position="151"/>
    </location>
</feature>
<feature type="transmembrane region" description="Helical" evidence="1">
    <location>
        <begin position="180"/>
        <end position="200"/>
    </location>
</feature>
<feature type="transmembrane region" description="Helical" evidence="1">
    <location>
        <begin position="210"/>
        <end position="230"/>
    </location>
</feature>
<protein>
    <recommendedName>
        <fullName>UPF0177 protein YaiH</fullName>
    </recommendedName>
</protein>
<dbReference type="EMBL" id="AE005176">
    <property type="protein sequence ID" value="AAK04183.1"/>
    <property type="molecule type" value="Genomic_DNA"/>
</dbReference>
<dbReference type="PIR" id="E86635">
    <property type="entry name" value="E86635"/>
</dbReference>
<dbReference type="RefSeq" id="NP_266241.1">
    <property type="nucleotide sequence ID" value="NC_002662.1"/>
</dbReference>
<dbReference type="RefSeq" id="WP_010905101.1">
    <property type="nucleotide sequence ID" value="NC_002662.1"/>
</dbReference>
<dbReference type="PaxDb" id="272623-L89118"/>
<dbReference type="EnsemblBacteria" id="AAK04183">
    <property type="protein sequence ID" value="AAK04183"/>
    <property type="gene ID" value="L89118"/>
</dbReference>
<dbReference type="KEGG" id="lla:L89118"/>
<dbReference type="PATRIC" id="fig|272623.7.peg.97"/>
<dbReference type="eggNOG" id="COG1266">
    <property type="taxonomic scope" value="Bacteria"/>
</dbReference>
<dbReference type="HOGENOM" id="CLU_109309_0_0_9"/>
<dbReference type="OrthoDB" id="8607342at2"/>
<dbReference type="Proteomes" id="UP000002196">
    <property type="component" value="Chromosome"/>
</dbReference>
<dbReference type="GO" id="GO:0005886">
    <property type="term" value="C:plasma membrane"/>
    <property type="evidence" value="ECO:0007669"/>
    <property type="project" value="UniProtKB-SubCell"/>
</dbReference>
<dbReference type="GO" id="GO:0004175">
    <property type="term" value="F:endopeptidase activity"/>
    <property type="evidence" value="ECO:0007669"/>
    <property type="project" value="UniProtKB-ARBA"/>
</dbReference>
<dbReference type="GO" id="GO:0080120">
    <property type="term" value="P:CAAX-box protein maturation"/>
    <property type="evidence" value="ECO:0007669"/>
    <property type="project" value="UniProtKB-ARBA"/>
</dbReference>
<dbReference type="InterPro" id="IPR003675">
    <property type="entry name" value="Rce1/LyrA-like_dom"/>
</dbReference>
<dbReference type="Pfam" id="PF02517">
    <property type="entry name" value="Rce1-like"/>
    <property type="match status" value="1"/>
</dbReference>
<name>YAIH_LACLA</name>
<organism>
    <name type="scientific">Lactococcus lactis subsp. lactis (strain IL1403)</name>
    <name type="common">Streptococcus lactis</name>
    <dbReference type="NCBI Taxonomy" id="272623"/>
    <lineage>
        <taxon>Bacteria</taxon>
        <taxon>Bacillati</taxon>
        <taxon>Bacillota</taxon>
        <taxon>Bacilli</taxon>
        <taxon>Lactobacillales</taxon>
        <taxon>Streptococcaceae</taxon>
        <taxon>Lactococcus</taxon>
    </lineage>
</organism>
<accession>Q9CJB2</accession>
<comment type="subcellular location">
    <subcellularLocation>
        <location evidence="2">Cell membrane</location>
        <topology evidence="2">Multi-pass membrane protein</topology>
    </subcellularLocation>
</comment>
<comment type="similarity">
    <text evidence="2">Belongs to the UPF0177 family.</text>
</comment>
<sequence length="236" mass="27679">MMDDSFKNYWMNKLKYFSLFILLFAIYWFPDVILGYPEIYLKSLVGYDRQATATWIFLGNMAISLFLGILICYKLGYYKNTLSIFKIKNILFLLFTTIVLFIIYFFTFTYYNSHFITPGIAKEQAAYSRQIVFPFVQFISFAICAPIFEEAAFRTTIYRFFKNDKIAFIVSSISFAWMHTGANPILIVYLPMSVVLTLIYHRRRVLGESILVHCLMNALLPTIIVFLQTITGLYYL</sequence>
<evidence type="ECO:0000255" key="1"/>
<evidence type="ECO:0000305" key="2"/>
<gene>
    <name type="primary">yaiH</name>
    <name type="ordered locus">LL0085</name>
    <name type="ORF">L89118</name>
</gene>
<keyword id="KW-1003">Cell membrane</keyword>
<keyword id="KW-0472">Membrane</keyword>
<keyword id="KW-1185">Reference proteome</keyword>
<keyword id="KW-0812">Transmembrane</keyword>
<keyword id="KW-1133">Transmembrane helix</keyword>